<reference key="1">
    <citation type="journal article" date="1982" name="Hoppe-Seyler's Z. Physiol. Chem.">
        <title>Primary structure of the hemoglobins from the Egyptian fruit bat (Rousettus aegyptiacus, Chiroptera).</title>
        <authorList>
            <person name="Kleinschmidt T."/>
            <person name="Braunitzer G."/>
        </authorList>
    </citation>
    <scope>PROTEIN SEQUENCE</scope>
</reference>
<dbReference type="PIR" id="A02279">
    <property type="entry name" value="HABTF"/>
</dbReference>
<dbReference type="SMR" id="P01956"/>
<dbReference type="GO" id="GO:0072562">
    <property type="term" value="C:blood microparticle"/>
    <property type="evidence" value="ECO:0007669"/>
    <property type="project" value="TreeGrafter"/>
</dbReference>
<dbReference type="GO" id="GO:0031838">
    <property type="term" value="C:haptoglobin-hemoglobin complex"/>
    <property type="evidence" value="ECO:0007669"/>
    <property type="project" value="TreeGrafter"/>
</dbReference>
<dbReference type="GO" id="GO:0005833">
    <property type="term" value="C:hemoglobin complex"/>
    <property type="evidence" value="ECO:0007669"/>
    <property type="project" value="InterPro"/>
</dbReference>
<dbReference type="GO" id="GO:0031720">
    <property type="term" value="F:haptoglobin binding"/>
    <property type="evidence" value="ECO:0007669"/>
    <property type="project" value="TreeGrafter"/>
</dbReference>
<dbReference type="GO" id="GO:0020037">
    <property type="term" value="F:heme binding"/>
    <property type="evidence" value="ECO:0007669"/>
    <property type="project" value="InterPro"/>
</dbReference>
<dbReference type="GO" id="GO:0005506">
    <property type="term" value="F:iron ion binding"/>
    <property type="evidence" value="ECO:0007669"/>
    <property type="project" value="InterPro"/>
</dbReference>
<dbReference type="GO" id="GO:0043177">
    <property type="term" value="F:organic acid binding"/>
    <property type="evidence" value="ECO:0007669"/>
    <property type="project" value="TreeGrafter"/>
</dbReference>
<dbReference type="GO" id="GO:0019825">
    <property type="term" value="F:oxygen binding"/>
    <property type="evidence" value="ECO:0007669"/>
    <property type="project" value="InterPro"/>
</dbReference>
<dbReference type="GO" id="GO:0005344">
    <property type="term" value="F:oxygen carrier activity"/>
    <property type="evidence" value="ECO:0007669"/>
    <property type="project" value="UniProtKB-KW"/>
</dbReference>
<dbReference type="GO" id="GO:0004601">
    <property type="term" value="F:peroxidase activity"/>
    <property type="evidence" value="ECO:0007669"/>
    <property type="project" value="TreeGrafter"/>
</dbReference>
<dbReference type="GO" id="GO:0042744">
    <property type="term" value="P:hydrogen peroxide catabolic process"/>
    <property type="evidence" value="ECO:0007669"/>
    <property type="project" value="TreeGrafter"/>
</dbReference>
<dbReference type="CDD" id="cd08927">
    <property type="entry name" value="Hb-alpha-like"/>
    <property type="match status" value="1"/>
</dbReference>
<dbReference type="FunFam" id="1.10.490.10:FF:000002">
    <property type="entry name" value="Hemoglobin subunit alpha"/>
    <property type="match status" value="1"/>
</dbReference>
<dbReference type="Gene3D" id="1.10.490.10">
    <property type="entry name" value="Globins"/>
    <property type="match status" value="1"/>
</dbReference>
<dbReference type="InterPro" id="IPR000971">
    <property type="entry name" value="Globin"/>
</dbReference>
<dbReference type="InterPro" id="IPR009050">
    <property type="entry name" value="Globin-like_sf"/>
</dbReference>
<dbReference type="InterPro" id="IPR012292">
    <property type="entry name" value="Globin/Proto"/>
</dbReference>
<dbReference type="InterPro" id="IPR002338">
    <property type="entry name" value="Hemoglobin_a-typ"/>
</dbReference>
<dbReference type="InterPro" id="IPR050056">
    <property type="entry name" value="Hemoglobin_oxygen_transport"/>
</dbReference>
<dbReference type="InterPro" id="IPR002339">
    <property type="entry name" value="Hemoglobin_pi"/>
</dbReference>
<dbReference type="PANTHER" id="PTHR11442">
    <property type="entry name" value="HEMOGLOBIN FAMILY MEMBER"/>
    <property type="match status" value="1"/>
</dbReference>
<dbReference type="PANTHER" id="PTHR11442:SF48">
    <property type="entry name" value="HEMOGLOBIN SUBUNIT ALPHA"/>
    <property type="match status" value="1"/>
</dbReference>
<dbReference type="Pfam" id="PF00042">
    <property type="entry name" value="Globin"/>
    <property type="match status" value="1"/>
</dbReference>
<dbReference type="PRINTS" id="PR00612">
    <property type="entry name" value="ALPHAHAEM"/>
</dbReference>
<dbReference type="PRINTS" id="PR00815">
    <property type="entry name" value="PIHAEM"/>
</dbReference>
<dbReference type="SUPFAM" id="SSF46458">
    <property type="entry name" value="Globin-like"/>
    <property type="match status" value="1"/>
</dbReference>
<dbReference type="PROSITE" id="PS01033">
    <property type="entry name" value="GLOBIN"/>
    <property type="match status" value="1"/>
</dbReference>
<name>HBA_ROUAE</name>
<comment type="function">
    <text>Involved in oxygen transport from the lung to the various peripheral tissues.</text>
</comment>
<comment type="function">
    <molecule>Hemopressin</molecule>
    <text evidence="2">Hemopressin acts as an antagonist peptide of the cannabinoid receptor CNR1. Hemopressin-binding efficiently blocks cannabinoid receptor CNR1 and subsequent signaling.</text>
</comment>
<comment type="subunit">
    <text>Heterotetramer of two alpha chains and two beta chains.</text>
</comment>
<comment type="tissue specificity">
    <text>Red blood cells.</text>
</comment>
<comment type="similarity">
    <text evidence="4">Belongs to the globin family.</text>
</comment>
<gene>
    <name type="primary">HBA</name>
</gene>
<feature type="chain" id="PRO_0000052754" description="Hemoglobin subunit alpha">
    <location>
        <begin position="1"/>
        <end position="141"/>
    </location>
</feature>
<feature type="peptide" id="PRO_0000455940" description="Hemopressin" evidence="2">
    <location>
        <begin position="95"/>
        <end position="103"/>
    </location>
</feature>
<feature type="domain" description="Globin" evidence="4">
    <location>
        <begin position="1"/>
        <end position="141"/>
    </location>
</feature>
<feature type="binding site" evidence="4">
    <location>
        <position position="58"/>
    </location>
    <ligand>
        <name>O2</name>
        <dbReference type="ChEBI" id="CHEBI:15379"/>
    </ligand>
</feature>
<feature type="binding site" description="proximal binding residue" evidence="4">
    <location>
        <position position="87"/>
    </location>
    <ligand>
        <name>heme b</name>
        <dbReference type="ChEBI" id="CHEBI:60344"/>
    </ligand>
    <ligandPart>
        <name>Fe</name>
        <dbReference type="ChEBI" id="CHEBI:18248"/>
    </ligandPart>
</feature>
<feature type="modified residue" description="Phosphoserine" evidence="3">
    <location>
        <position position="3"/>
    </location>
</feature>
<feature type="modified residue" description="N6-succinyllysine" evidence="1">
    <location>
        <position position="7"/>
    </location>
</feature>
<feature type="modified residue" description="Phosphothreonine" evidence="3">
    <location>
        <position position="8"/>
    </location>
</feature>
<feature type="modified residue" description="N6-succinyllysine" evidence="1">
    <location>
        <position position="11"/>
    </location>
</feature>
<feature type="modified residue" description="N6-acetyllysine; alternate" evidence="3">
    <location>
        <position position="16"/>
    </location>
</feature>
<feature type="modified residue" description="N6-succinyllysine; alternate" evidence="1">
    <location>
        <position position="16"/>
    </location>
</feature>
<feature type="modified residue" description="Phosphotyrosine" evidence="3">
    <location>
        <position position="24"/>
    </location>
</feature>
<feature type="modified residue" description="Phosphoserine" evidence="3">
    <location>
        <position position="35"/>
    </location>
</feature>
<feature type="modified residue" description="N6-succinyllysine" evidence="1">
    <location>
        <position position="40"/>
    </location>
</feature>
<feature type="modified residue" description="Phosphoserine" evidence="3">
    <location>
        <position position="49"/>
    </location>
</feature>
<feature type="modified residue" description="Phosphoserine" evidence="1">
    <location>
        <position position="102"/>
    </location>
</feature>
<feature type="modified residue" description="Phosphothreonine" evidence="1">
    <location>
        <position position="108"/>
    </location>
</feature>
<feature type="modified residue" description="Phosphoserine" evidence="1">
    <location>
        <position position="124"/>
    </location>
</feature>
<feature type="modified residue" description="Phosphoserine" evidence="1">
    <location>
        <position position="131"/>
    </location>
</feature>
<feature type="modified residue" description="Phosphothreonine" evidence="1">
    <location>
        <position position="134"/>
    </location>
</feature>
<feature type="modified residue" description="Phosphothreonine" evidence="1">
    <location>
        <position position="137"/>
    </location>
</feature>
<feature type="modified residue" description="Phosphoserine" evidence="1">
    <location>
        <position position="138"/>
    </location>
</feature>
<protein>
    <recommendedName>
        <fullName>Hemoglobin subunit alpha</fullName>
    </recommendedName>
    <alternativeName>
        <fullName>Alpha-globin</fullName>
    </alternativeName>
    <alternativeName>
        <fullName>Hemoglobin alpha chain</fullName>
    </alternativeName>
    <component>
        <recommendedName>
            <fullName evidence="2">Hemopressin</fullName>
        </recommendedName>
    </component>
</protein>
<organism>
    <name type="scientific">Rousettus aegyptiacus</name>
    <name type="common">Egyptian fruit bat</name>
    <name type="synonym">Pteropus aegyptiacus</name>
    <dbReference type="NCBI Taxonomy" id="9407"/>
    <lineage>
        <taxon>Eukaryota</taxon>
        <taxon>Metazoa</taxon>
        <taxon>Chordata</taxon>
        <taxon>Craniata</taxon>
        <taxon>Vertebrata</taxon>
        <taxon>Euteleostomi</taxon>
        <taxon>Mammalia</taxon>
        <taxon>Eutheria</taxon>
        <taxon>Laurasiatheria</taxon>
        <taxon>Chiroptera</taxon>
        <taxon>Yinpterochiroptera</taxon>
        <taxon>Pteropodoidea</taxon>
        <taxon>Pteropodidae</taxon>
        <taxon>Rousettinae</taxon>
        <taxon>Rousettus</taxon>
    </lineage>
</organism>
<keyword id="KW-0007">Acetylation</keyword>
<keyword id="KW-0903">Direct protein sequencing</keyword>
<keyword id="KW-0349">Heme</keyword>
<keyword id="KW-0408">Iron</keyword>
<keyword id="KW-0479">Metal-binding</keyword>
<keyword id="KW-0561">Oxygen transport</keyword>
<keyword id="KW-0597">Phosphoprotein</keyword>
<keyword id="KW-0813">Transport</keyword>
<proteinExistence type="evidence at protein level"/>
<evidence type="ECO:0000250" key="1">
    <source>
        <dbReference type="UniProtKB" id="P01942"/>
    </source>
</evidence>
<evidence type="ECO:0000250" key="2">
    <source>
        <dbReference type="UniProtKB" id="P01946"/>
    </source>
</evidence>
<evidence type="ECO:0000250" key="3">
    <source>
        <dbReference type="UniProtKB" id="P69905"/>
    </source>
</evidence>
<evidence type="ECO:0000255" key="4">
    <source>
        <dbReference type="PROSITE-ProRule" id="PRU00238"/>
    </source>
</evidence>
<sequence length="141" mass="15133">VLSSADKTNIKAAWDKVGGNAGEYGAEALERMFLSFPTTKTYFPHFDLSHGSAQVKGHGKKVGDALTNAVGHLDDLPGALSALSDLHAYKLRVDPVNFKLLSHCLLVTLANHLPSDFTPAVHASLDKFLASVSTVLTSKYR</sequence>
<accession>P01956</accession>